<protein>
    <recommendedName>
        <fullName evidence="1">GTP 3',8-cyclase</fullName>
        <ecNumber evidence="1">4.1.99.22</ecNumber>
    </recommendedName>
    <alternativeName>
        <fullName evidence="1">Molybdenum cofactor biosynthesis protein A</fullName>
    </alternativeName>
</protein>
<gene>
    <name evidence="1" type="primary">moaA</name>
    <name type="ordered locus">SSPA1819</name>
</gene>
<feature type="chain" id="PRO_1000139345" description="GTP 3',8-cyclase">
    <location>
        <begin position="1"/>
        <end position="329"/>
    </location>
</feature>
<feature type="domain" description="Radical SAM core" evidence="2">
    <location>
        <begin position="8"/>
        <end position="234"/>
    </location>
</feature>
<feature type="binding site" evidence="1">
    <location>
        <position position="17"/>
    </location>
    <ligand>
        <name>GTP</name>
        <dbReference type="ChEBI" id="CHEBI:37565"/>
    </ligand>
</feature>
<feature type="binding site" evidence="1">
    <location>
        <position position="24"/>
    </location>
    <ligand>
        <name>[4Fe-4S] cluster</name>
        <dbReference type="ChEBI" id="CHEBI:49883"/>
        <label>1</label>
        <note>4Fe-4S-S-AdoMet</note>
    </ligand>
</feature>
<feature type="binding site" evidence="1">
    <location>
        <position position="28"/>
    </location>
    <ligand>
        <name>[4Fe-4S] cluster</name>
        <dbReference type="ChEBI" id="CHEBI:49883"/>
        <label>1</label>
        <note>4Fe-4S-S-AdoMet</note>
    </ligand>
</feature>
<feature type="binding site" evidence="1">
    <location>
        <position position="30"/>
    </location>
    <ligand>
        <name>S-adenosyl-L-methionine</name>
        <dbReference type="ChEBI" id="CHEBI:59789"/>
    </ligand>
</feature>
<feature type="binding site" evidence="1">
    <location>
        <position position="31"/>
    </location>
    <ligand>
        <name>[4Fe-4S] cluster</name>
        <dbReference type="ChEBI" id="CHEBI:49883"/>
        <label>1</label>
        <note>4Fe-4S-S-AdoMet</note>
    </ligand>
</feature>
<feature type="binding site" evidence="1">
    <location>
        <position position="68"/>
    </location>
    <ligand>
        <name>GTP</name>
        <dbReference type="ChEBI" id="CHEBI:37565"/>
    </ligand>
</feature>
<feature type="binding site" evidence="1">
    <location>
        <position position="72"/>
    </location>
    <ligand>
        <name>S-adenosyl-L-methionine</name>
        <dbReference type="ChEBI" id="CHEBI:59789"/>
    </ligand>
</feature>
<feature type="binding site" evidence="1">
    <location>
        <position position="99"/>
    </location>
    <ligand>
        <name>GTP</name>
        <dbReference type="ChEBI" id="CHEBI:37565"/>
    </ligand>
</feature>
<feature type="binding site" evidence="1">
    <location>
        <position position="123"/>
    </location>
    <ligand>
        <name>S-adenosyl-L-methionine</name>
        <dbReference type="ChEBI" id="CHEBI:59789"/>
    </ligand>
</feature>
<feature type="binding site" evidence="1">
    <location>
        <position position="160"/>
    </location>
    <ligand>
        <name>GTP</name>
        <dbReference type="ChEBI" id="CHEBI:37565"/>
    </ligand>
</feature>
<feature type="binding site" evidence="1">
    <location>
        <position position="194"/>
    </location>
    <ligand>
        <name>S-adenosyl-L-methionine</name>
        <dbReference type="ChEBI" id="CHEBI:59789"/>
    </ligand>
</feature>
<feature type="binding site" evidence="1">
    <location>
        <position position="257"/>
    </location>
    <ligand>
        <name>[4Fe-4S] cluster</name>
        <dbReference type="ChEBI" id="CHEBI:49883"/>
        <label>2</label>
        <note>4Fe-4S-substrate</note>
    </ligand>
</feature>
<feature type="binding site" evidence="1">
    <location>
        <position position="260"/>
    </location>
    <ligand>
        <name>[4Fe-4S] cluster</name>
        <dbReference type="ChEBI" id="CHEBI:49883"/>
        <label>2</label>
        <note>4Fe-4S-substrate</note>
    </ligand>
</feature>
<feature type="binding site" evidence="1">
    <location>
        <begin position="262"/>
        <end position="264"/>
    </location>
    <ligand>
        <name>GTP</name>
        <dbReference type="ChEBI" id="CHEBI:37565"/>
    </ligand>
</feature>
<feature type="binding site" evidence="1">
    <location>
        <position position="274"/>
    </location>
    <ligand>
        <name>[4Fe-4S] cluster</name>
        <dbReference type="ChEBI" id="CHEBI:49883"/>
        <label>2</label>
        <note>4Fe-4S-substrate</note>
    </ligand>
</feature>
<evidence type="ECO:0000255" key="1">
    <source>
        <dbReference type="HAMAP-Rule" id="MF_01225"/>
    </source>
</evidence>
<evidence type="ECO:0000255" key="2">
    <source>
        <dbReference type="PROSITE-ProRule" id="PRU01266"/>
    </source>
</evidence>
<name>MOAA_SALPK</name>
<organism>
    <name type="scientific">Salmonella paratyphi A (strain AKU_12601)</name>
    <dbReference type="NCBI Taxonomy" id="554290"/>
    <lineage>
        <taxon>Bacteria</taxon>
        <taxon>Pseudomonadati</taxon>
        <taxon>Pseudomonadota</taxon>
        <taxon>Gammaproteobacteria</taxon>
        <taxon>Enterobacterales</taxon>
        <taxon>Enterobacteriaceae</taxon>
        <taxon>Salmonella</taxon>
    </lineage>
</organism>
<comment type="function">
    <text evidence="1">Catalyzes the cyclization of GTP to (8S)-3',8-cyclo-7,8-dihydroguanosine 5'-triphosphate.</text>
</comment>
<comment type="catalytic activity">
    <reaction evidence="1">
        <text>GTP + AH2 + S-adenosyl-L-methionine = (8S)-3',8-cyclo-7,8-dihydroguanosine 5'-triphosphate + 5'-deoxyadenosine + L-methionine + A + H(+)</text>
        <dbReference type="Rhea" id="RHEA:49576"/>
        <dbReference type="ChEBI" id="CHEBI:13193"/>
        <dbReference type="ChEBI" id="CHEBI:15378"/>
        <dbReference type="ChEBI" id="CHEBI:17319"/>
        <dbReference type="ChEBI" id="CHEBI:17499"/>
        <dbReference type="ChEBI" id="CHEBI:37565"/>
        <dbReference type="ChEBI" id="CHEBI:57844"/>
        <dbReference type="ChEBI" id="CHEBI:59789"/>
        <dbReference type="ChEBI" id="CHEBI:131766"/>
        <dbReference type="EC" id="4.1.99.22"/>
    </reaction>
</comment>
<comment type="cofactor">
    <cofactor evidence="1">
        <name>[4Fe-4S] cluster</name>
        <dbReference type="ChEBI" id="CHEBI:49883"/>
    </cofactor>
    <text evidence="1">Binds 2 [4Fe-4S] clusters. Binds 1 [4Fe-4S] cluster coordinated with 3 cysteines and an exchangeable S-adenosyl-L-methionine and 1 [4Fe-4S] cluster coordinated with 3 cysteines and the GTP-derived substrate.</text>
</comment>
<comment type="pathway">
    <text evidence="1">Cofactor biosynthesis; molybdopterin biosynthesis.</text>
</comment>
<comment type="subunit">
    <text evidence="1">Monomer and homodimer.</text>
</comment>
<comment type="similarity">
    <text evidence="1">Belongs to the radical SAM superfamily. MoaA family.</text>
</comment>
<sequence>MASQLTDAFARKFYYLRLSITDVCNFRCTYCLPDGYKPGGVTNNGFLTVDEIRRVTRAFASLGTEKVRLTGGEPSLRRDFTDIIAAVGENDAIRQIAVTTNGYRLARDAANWREAGLTGVNVSVDSLDARQFHAITGQDKFRQVMAGIDAAFDAGFEKVKVNTVLMRDVNHHQLDTFLAWIQPRPIQLRFIELMETGEGSDLFRKHHISGQVLRDELIKRGWIHQLRQRSDGPAQVFCHPDYAGEIGLIMPYEKDFCATCNRLRVSSVGKLHLCLFGDGGVSLRDLLQDDAQQYALEERISDALREKKQTHFLHQSNTGITQNLSYIGG</sequence>
<dbReference type="EC" id="4.1.99.22" evidence="1"/>
<dbReference type="EMBL" id="FM200053">
    <property type="protein sequence ID" value="CAR60014.1"/>
    <property type="molecule type" value="Genomic_DNA"/>
</dbReference>
<dbReference type="RefSeq" id="WP_000168180.1">
    <property type="nucleotide sequence ID" value="NC_011147.1"/>
</dbReference>
<dbReference type="SMR" id="B5BC24"/>
<dbReference type="KEGG" id="sek:SSPA1819"/>
<dbReference type="HOGENOM" id="CLU_009273_0_1_6"/>
<dbReference type="UniPathway" id="UPA00344"/>
<dbReference type="Proteomes" id="UP000001869">
    <property type="component" value="Chromosome"/>
</dbReference>
<dbReference type="GO" id="GO:0051539">
    <property type="term" value="F:4 iron, 4 sulfur cluster binding"/>
    <property type="evidence" value="ECO:0007669"/>
    <property type="project" value="UniProtKB-UniRule"/>
</dbReference>
<dbReference type="GO" id="GO:0061799">
    <property type="term" value="F:cyclic pyranopterin monophosphate synthase activity"/>
    <property type="evidence" value="ECO:0007669"/>
    <property type="project" value="TreeGrafter"/>
</dbReference>
<dbReference type="GO" id="GO:0061798">
    <property type="term" value="F:GTP 3',8'-cyclase activity"/>
    <property type="evidence" value="ECO:0007669"/>
    <property type="project" value="UniProtKB-UniRule"/>
</dbReference>
<dbReference type="GO" id="GO:0005525">
    <property type="term" value="F:GTP binding"/>
    <property type="evidence" value="ECO:0007669"/>
    <property type="project" value="UniProtKB-UniRule"/>
</dbReference>
<dbReference type="GO" id="GO:0046872">
    <property type="term" value="F:metal ion binding"/>
    <property type="evidence" value="ECO:0007669"/>
    <property type="project" value="UniProtKB-KW"/>
</dbReference>
<dbReference type="GO" id="GO:1904047">
    <property type="term" value="F:S-adenosyl-L-methionine binding"/>
    <property type="evidence" value="ECO:0007669"/>
    <property type="project" value="UniProtKB-UniRule"/>
</dbReference>
<dbReference type="GO" id="GO:0006777">
    <property type="term" value="P:Mo-molybdopterin cofactor biosynthetic process"/>
    <property type="evidence" value="ECO:0007669"/>
    <property type="project" value="UniProtKB-UniRule"/>
</dbReference>
<dbReference type="CDD" id="cd01335">
    <property type="entry name" value="Radical_SAM"/>
    <property type="match status" value="1"/>
</dbReference>
<dbReference type="CDD" id="cd21117">
    <property type="entry name" value="Twitch_MoaA"/>
    <property type="match status" value="1"/>
</dbReference>
<dbReference type="FunFam" id="3.20.20.70:FF:000057">
    <property type="entry name" value="GTP 3',8-cyclase"/>
    <property type="match status" value="1"/>
</dbReference>
<dbReference type="Gene3D" id="3.20.20.70">
    <property type="entry name" value="Aldolase class I"/>
    <property type="match status" value="1"/>
</dbReference>
<dbReference type="HAMAP" id="MF_01225_B">
    <property type="entry name" value="MoaA_B"/>
    <property type="match status" value="1"/>
</dbReference>
<dbReference type="InterPro" id="IPR013785">
    <property type="entry name" value="Aldolase_TIM"/>
</dbReference>
<dbReference type="InterPro" id="IPR006638">
    <property type="entry name" value="Elp3/MiaA/NifB-like_rSAM"/>
</dbReference>
<dbReference type="InterPro" id="IPR013483">
    <property type="entry name" value="MoaA"/>
</dbReference>
<dbReference type="InterPro" id="IPR000385">
    <property type="entry name" value="MoaA_NifB_PqqE_Fe-S-bd_CS"/>
</dbReference>
<dbReference type="InterPro" id="IPR010505">
    <property type="entry name" value="MoaA_twitch"/>
</dbReference>
<dbReference type="InterPro" id="IPR050105">
    <property type="entry name" value="MoCo_biosynth_MoaA/MoaC"/>
</dbReference>
<dbReference type="InterPro" id="IPR007197">
    <property type="entry name" value="rSAM"/>
</dbReference>
<dbReference type="NCBIfam" id="TIGR02666">
    <property type="entry name" value="moaA"/>
    <property type="match status" value="1"/>
</dbReference>
<dbReference type="PANTHER" id="PTHR22960:SF28">
    <property type="entry name" value="GTP 3',8-CYCLASE"/>
    <property type="match status" value="1"/>
</dbReference>
<dbReference type="PANTHER" id="PTHR22960">
    <property type="entry name" value="MOLYBDOPTERIN COFACTOR SYNTHESIS PROTEIN A"/>
    <property type="match status" value="1"/>
</dbReference>
<dbReference type="Pfam" id="PF06463">
    <property type="entry name" value="Mob_synth_C"/>
    <property type="match status" value="1"/>
</dbReference>
<dbReference type="Pfam" id="PF04055">
    <property type="entry name" value="Radical_SAM"/>
    <property type="match status" value="1"/>
</dbReference>
<dbReference type="SFLD" id="SFLDG01383">
    <property type="entry name" value="cyclic_pyranopterin_phosphate"/>
    <property type="match status" value="1"/>
</dbReference>
<dbReference type="SFLD" id="SFLDS00029">
    <property type="entry name" value="Radical_SAM"/>
    <property type="match status" value="1"/>
</dbReference>
<dbReference type="SMART" id="SM00729">
    <property type="entry name" value="Elp3"/>
    <property type="match status" value="1"/>
</dbReference>
<dbReference type="SUPFAM" id="SSF102114">
    <property type="entry name" value="Radical SAM enzymes"/>
    <property type="match status" value="1"/>
</dbReference>
<dbReference type="PROSITE" id="PS01305">
    <property type="entry name" value="MOAA_NIFB_PQQE"/>
    <property type="match status" value="1"/>
</dbReference>
<dbReference type="PROSITE" id="PS51918">
    <property type="entry name" value="RADICAL_SAM"/>
    <property type="match status" value="1"/>
</dbReference>
<keyword id="KW-0004">4Fe-4S</keyword>
<keyword id="KW-0342">GTP-binding</keyword>
<keyword id="KW-0408">Iron</keyword>
<keyword id="KW-0411">Iron-sulfur</keyword>
<keyword id="KW-0456">Lyase</keyword>
<keyword id="KW-0479">Metal-binding</keyword>
<keyword id="KW-0501">Molybdenum cofactor biosynthesis</keyword>
<keyword id="KW-0547">Nucleotide-binding</keyword>
<keyword id="KW-0949">S-adenosyl-L-methionine</keyword>
<accession>B5BC24</accession>
<proteinExistence type="inferred from homology"/>
<reference key="1">
    <citation type="journal article" date="2009" name="BMC Genomics">
        <title>Pseudogene accumulation in the evolutionary histories of Salmonella enterica serovars Paratyphi A and Typhi.</title>
        <authorList>
            <person name="Holt K.E."/>
            <person name="Thomson N.R."/>
            <person name="Wain J."/>
            <person name="Langridge G.C."/>
            <person name="Hasan R."/>
            <person name="Bhutta Z.A."/>
            <person name="Quail M.A."/>
            <person name="Norbertczak H."/>
            <person name="Walker D."/>
            <person name="Simmonds M."/>
            <person name="White B."/>
            <person name="Bason N."/>
            <person name="Mungall K."/>
            <person name="Dougan G."/>
            <person name="Parkhill J."/>
        </authorList>
    </citation>
    <scope>NUCLEOTIDE SEQUENCE [LARGE SCALE GENOMIC DNA]</scope>
    <source>
        <strain>AKU_12601</strain>
    </source>
</reference>